<sequence length="265" mass="30900">MLIPRLDEVRRALTAFHFFNTLLALAFPVIRSTSLCDYVFAVEGNEQCEIDSREREILMFLLIILAWKGRKATNWMHYVNNIFLFSKIAGMFLFIRADILPGIIYILACLIVTVLFPEPVYNGPEQVTYFQGEQLFEELTRNRNTIWVIQFFTTWSPECRHTSPVFAELSQKFTLPNMKFGKLDIGRWAKEGERFRVNAHPMSRQLPTICVFKDAKEIARRPLVNDSRRAVPFVFSEENCVLAFDLLNLYNEQKEKKGAKAKKED</sequence>
<reference key="1">
    <citation type="journal article" date="1998" name="Science">
        <title>Genome sequence of the nematode C. elegans: a platform for investigating biology.</title>
        <authorList>
            <consortium name="The C. elegans sequencing consortium"/>
        </authorList>
    </citation>
    <scope>NUCLEOTIDE SEQUENCE [LARGE SCALE GENOMIC DNA]</scope>
    <source>
        <strain>Bristol N2</strain>
    </source>
</reference>
<keyword id="KW-0472">Membrane</keyword>
<keyword id="KW-1185">Reference proteome</keyword>
<keyword id="KW-0732">Signal</keyword>
<keyword id="KW-0812">Transmembrane</keyword>
<keyword id="KW-1133">Transmembrane helix</keyword>
<comment type="subcellular location">
    <subcellularLocation>
        <location evidence="3">Membrane</location>
        <topology evidence="3">Single-pass type I membrane protein</topology>
    </subcellularLocation>
</comment>
<comment type="domain">
    <text evidence="1">The thioredoxin domain lacks the 2 redox-active cysteines, suggesting that it lacks thioredoxin activity.</text>
</comment>
<comment type="domain">
    <text evidence="1">The di-lysine motif confers endoplasmic reticulum localization for type I membrane proteins.</text>
</comment>
<gene>
    <name type="ORF">C35D10.10</name>
</gene>
<proteinExistence type="inferred from homology"/>
<evidence type="ECO:0000250" key="1"/>
<evidence type="ECO:0000255" key="2"/>
<evidence type="ECO:0000305" key="3"/>
<protein>
    <recommendedName>
        <fullName>Thioredoxin-related transmembrane protein 2 homolog</fullName>
    </recommendedName>
    <alternativeName>
        <fullName>Thioredoxin domain-containing protein 14 homolog</fullName>
    </alternativeName>
</protein>
<name>TMX2_CAEEL</name>
<accession>Q18484</accession>
<feature type="signal peptide" evidence="2">
    <location>
        <begin position="1"/>
        <end position="32"/>
    </location>
</feature>
<feature type="chain" id="PRO_0000315760" description="Thioredoxin-related transmembrane protein 2 homolog">
    <location>
        <begin position="33"/>
        <end position="265"/>
    </location>
</feature>
<feature type="topological domain" description="Extracellular" evidence="2">
    <location>
        <begin position="33"/>
        <end position="96"/>
    </location>
</feature>
<feature type="transmembrane region" description="Helical" evidence="2">
    <location>
        <begin position="97"/>
        <end position="117"/>
    </location>
</feature>
<feature type="topological domain" description="Cytoplasmic" evidence="2">
    <location>
        <begin position="118"/>
        <end position="265"/>
    </location>
</feature>
<feature type="domain" description="Thioredoxin">
    <location>
        <begin position="126"/>
        <end position="230"/>
    </location>
</feature>
<feature type="short sequence motif" description="Di-lysine motif">
    <location>
        <begin position="262"/>
        <end position="265"/>
    </location>
</feature>
<dbReference type="EMBL" id="FO080789">
    <property type="protein sequence ID" value="CCD66783.1"/>
    <property type="molecule type" value="Genomic_DNA"/>
</dbReference>
<dbReference type="PIR" id="S72570">
    <property type="entry name" value="S72570"/>
</dbReference>
<dbReference type="RefSeq" id="NP_498012.1">
    <property type="nucleotide sequence ID" value="NM_065611.6"/>
</dbReference>
<dbReference type="SMR" id="Q18484"/>
<dbReference type="BioGRID" id="40880">
    <property type="interactions" value="1"/>
</dbReference>
<dbReference type="FunCoup" id="Q18484">
    <property type="interactions" value="1863"/>
</dbReference>
<dbReference type="STRING" id="6239.C35D10.10.1"/>
<dbReference type="PaxDb" id="6239-C35D10.10"/>
<dbReference type="PeptideAtlas" id="Q18484"/>
<dbReference type="EnsemblMetazoa" id="C35D10.10.1">
    <property type="protein sequence ID" value="C35D10.10.1"/>
    <property type="gene ID" value="WBGene00016446"/>
</dbReference>
<dbReference type="GeneID" id="175646"/>
<dbReference type="KEGG" id="cel:CELE_C35D10.10"/>
<dbReference type="UCSC" id="C35D10.10">
    <property type="organism name" value="c. elegans"/>
</dbReference>
<dbReference type="AGR" id="WB:WBGene00016446"/>
<dbReference type="CTD" id="175646"/>
<dbReference type="WormBase" id="C35D10.10">
    <property type="protein sequence ID" value="CE01191"/>
    <property type="gene ID" value="WBGene00016446"/>
</dbReference>
<dbReference type="eggNOG" id="KOG0914">
    <property type="taxonomic scope" value="Eukaryota"/>
</dbReference>
<dbReference type="GeneTree" id="ENSGT00390000003751"/>
<dbReference type="HOGENOM" id="CLU_064868_1_0_1"/>
<dbReference type="InParanoid" id="Q18484"/>
<dbReference type="OMA" id="VIMIRTR"/>
<dbReference type="OrthoDB" id="20229at2759"/>
<dbReference type="PhylomeDB" id="Q18484"/>
<dbReference type="PRO" id="PR:Q18484"/>
<dbReference type="Proteomes" id="UP000001940">
    <property type="component" value="Chromosome III"/>
</dbReference>
<dbReference type="Bgee" id="WBGene00016446">
    <property type="expression patterns" value="Expressed in germ line (C elegans) and 4 other cell types or tissues"/>
</dbReference>
<dbReference type="GO" id="GO:0005789">
    <property type="term" value="C:endoplasmic reticulum membrane"/>
    <property type="evidence" value="ECO:0000318"/>
    <property type="project" value="GO_Central"/>
</dbReference>
<dbReference type="GO" id="GO:0044233">
    <property type="term" value="C:mitochondria-associated endoplasmic reticulum membrane contact site"/>
    <property type="evidence" value="ECO:0000318"/>
    <property type="project" value="GO_Central"/>
</dbReference>
<dbReference type="GO" id="GO:0005739">
    <property type="term" value="C:mitochondrion"/>
    <property type="evidence" value="ECO:0000318"/>
    <property type="project" value="GO_Central"/>
</dbReference>
<dbReference type="GO" id="GO:0015036">
    <property type="term" value="F:disulfide oxidoreductase activity"/>
    <property type="evidence" value="ECO:0000318"/>
    <property type="project" value="GO_Central"/>
</dbReference>
<dbReference type="CDD" id="cd02962">
    <property type="entry name" value="TMX2"/>
    <property type="match status" value="1"/>
</dbReference>
<dbReference type="Gene3D" id="3.40.30.10">
    <property type="entry name" value="Glutaredoxin"/>
    <property type="match status" value="1"/>
</dbReference>
<dbReference type="InterPro" id="IPR036249">
    <property type="entry name" value="Thioredoxin-like_sf"/>
</dbReference>
<dbReference type="InterPro" id="IPR013766">
    <property type="entry name" value="Thioredoxin_domain"/>
</dbReference>
<dbReference type="InterPro" id="IPR039101">
    <property type="entry name" value="TMX2"/>
</dbReference>
<dbReference type="InterPro" id="IPR037463">
    <property type="entry name" value="TMX2_thioredoxin_dom"/>
</dbReference>
<dbReference type="PANTHER" id="PTHR15853">
    <property type="entry name" value="THIOREDOXIN-RELATED"/>
    <property type="match status" value="1"/>
</dbReference>
<dbReference type="PANTHER" id="PTHR15853:SF0">
    <property type="entry name" value="THIOREDOXIN-RELATED TRANSMEMBRANE PROTEIN 2"/>
    <property type="match status" value="1"/>
</dbReference>
<dbReference type="Pfam" id="PF00085">
    <property type="entry name" value="Thioredoxin"/>
    <property type="match status" value="1"/>
</dbReference>
<dbReference type="SUPFAM" id="SSF52833">
    <property type="entry name" value="Thioredoxin-like"/>
    <property type="match status" value="1"/>
</dbReference>
<organism>
    <name type="scientific">Caenorhabditis elegans</name>
    <dbReference type="NCBI Taxonomy" id="6239"/>
    <lineage>
        <taxon>Eukaryota</taxon>
        <taxon>Metazoa</taxon>
        <taxon>Ecdysozoa</taxon>
        <taxon>Nematoda</taxon>
        <taxon>Chromadorea</taxon>
        <taxon>Rhabditida</taxon>
        <taxon>Rhabditina</taxon>
        <taxon>Rhabditomorpha</taxon>
        <taxon>Rhabditoidea</taxon>
        <taxon>Rhabditidae</taxon>
        <taxon>Peloderinae</taxon>
        <taxon>Caenorhabditis</taxon>
    </lineage>
</organism>